<protein>
    <recommendedName>
        <fullName>U14-theraphotoxin-Cg1c</fullName>
        <shortName>U14-TRTX-Cg1c</shortName>
    </recommendedName>
    <alternativeName>
        <fullName evidence="3">Jingzhaotoxin-23</fullName>
        <shortName evidence="3">JZTX-23</shortName>
    </alternativeName>
</protein>
<evidence type="ECO:0000250" key="1"/>
<evidence type="ECO:0000255" key="2"/>
<evidence type="ECO:0000303" key="3">
    <source>
    </source>
</evidence>
<evidence type="ECO:0000305" key="4"/>
<accession>B1P1E9</accession>
<comment type="function">
    <text>Probable ion channel inhibitor.</text>
</comment>
<comment type="subcellular location">
    <subcellularLocation>
        <location evidence="1">Secreted</location>
    </subcellularLocation>
</comment>
<comment type="tissue specificity">
    <text>Expressed by the venom gland.</text>
</comment>
<comment type="domain">
    <text evidence="1">The presence of a 'disulfide through disulfide knot' structurally defines this protein as a knottin. Is missing the last conserved cysteine.</text>
</comment>
<comment type="similarity">
    <text evidence="4">Belongs to the neurotoxin 10 (Hwtx-1) family. 65 (Jztx-21) subfamily.</text>
</comment>
<organism>
    <name type="scientific">Chilobrachys guangxiensis</name>
    <name type="common">Chinese earth tiger tarantula</name>
    <name type="synonym">Chilobrachys jingzhao</name>
    <dbReference type="NCBI Taxonomy" id="278060"/>
    <lineage>
        <taxon>Eukaryota</taxon>
        <taxon>Metazoa</taxon>
        <taxon>Ecdysozoa</taxon>
        <taxon>Arthropoda</taxon>
        <taxon>Chelicerata</taxon>
        <taxon>Arachnida</taxon>
        <taxon>Araneae</taxon>
        <taxon>Mygalomorphae</taxon>
        <taxon>Theraphosidae</taxon>
        <taxon>Chilobrachys</taxon>
    </lineage>
</organism>
<keyword id="KW-1015">Disulfide bond</keyword>
<keyword id="KW-0872">Ion channel impairing toxin</keyword>
<keyword id="KW-0960">Knottin</keyword>
<keyword id="KW-0964">Secreted</keyword>
<keyword id="KW-0732">Signal</keyword>
<keyword id="KW-0800">Toxin</keyword>
<reference key="1">
    <citation type="journal article" date="2008" name="Cell. Mol. Life Sci.">
        <title>Molecular diversity and evolution of cystine knot toxins of the tarantula Chilobrachys jingzhao.</title>
        <authorList>
            <person name="Chen J."/>
            <person name="Deng M."/>
            <person name="He Q."/>
            <person name="Meng E."/>
            <person name="Jiang L."/>
            <person name="Liao Z."/>
            <person name="Rong M."/>
            <person name="Liang S."/>
        </authorList>
    </citation>
    <scope>NUCLEOTIDE SEQUENCE [LARGE SCALE MRNA]</scope>
    <source>
        <tissue>Venom gland</tissue>
    </source>
</reference>
<proteinExistence type="evidence at transcript level"/>
<name>JZT23_CHIGU</name>
<feature type="signal peptide" evidence="2">
    <location>
        <begin position="1"/>
        <end position="21"/>
    </location>
</feature>
<feature type="propeptide" id="PRO_0000398447" evidence="1">
    <location>
        <begin position="22"/>
        <end position="49"/>
    </location>
</feature>
<feature type="peptide" id="PRO_0000398448" description="U14-theraphotoxin-Cg1c">
    <location>
        <begin position="50"/>
        <end position="77"/>
    </location>
</feature>
<feature type="disulfide bond" evidence="1">
    <location>
        <begin position="50"/>
        <end position="64"/>
    </location>
</feature>
<feature type="disulfide bond" evidence="1">
    <location>
        <begin position="57"/>
        <end position="69"/>
    </location>
</feature>
<sequence>MNTSDPPAVLRIAAITLLCTASESVEQNPLIPFENAVLGSYAKMASEKRCDGWMAKCPDRDDCCETFHCTRFNARGN</sequence>
<dbReference type="EMBL" id="EU233880">
    <property type="protein sequence ID" value="ABY71699.1"/>
    <property type="molecule type" value="mRNA"/>
</dbReference>
<dbReference type="ArachnoServer" id="AS000828">
    <property type="toxin name" value="U14-theraphotoxin-Cg1d"/>
</dbReference>
<dbReference type="GO" id="GO:0005576">
    <property type="term" value="C:extracellular region"/>
    <property type="evidence" value="ECO:0007669"/>
    <property type="project" value="UniProtKB-SubCell"/>
</dbReference>
<dbReference type="GO" id="GO:0099106">
    <property type="term" value="F:ion channel regulator activity"/>
    <property type="evidence" value="ECO:0007669"/>
    <property type="project" value="UniProtKB-KW"/>
</dbReference>
<dbReference type="GO" id="GO:0090729">
    <property type="term" value="F:toxin activity"/>
    <property type="evidence" value="ECO:0007669"/>
    <property type="project" value="UniProtKB-KW"/>
</dbReference>